<dbReference type="EMBL" id="CP000653">
    <property type="protein sequence ID" value="ABP58963.1"/>
    <property type="molecule type" value="Genomic_DNA"/>
</dbReference>
<dbReference type="RefSeq" id="WP_011915536.1">
    <property type="nucleotide sequence ID" value="NC_009436.1"/>
</dbReference>
<dbReference type="SMR" id="A4W5I3"/>
<dbReference type="STRING" id="399742.Ent638_0274"/>
<dbReference type="KEGG" id="ent:Ent638_0274"/>
<dbReference type="eggNOG" id="COG4147">
    <property type="taxonomic scope" value="Bacteria"/>
</dbReference>
<dbReference type="HOGENOM" id="CLU_018808_8_3_6"/>
<dbReference type="OrthoDB" id="9764416at2"/>
<dbReference type="Proteomes" id="UP000000230">
    <property type="component" value="Chromosome"/>
</dbReference>
<dbReference type="GO" id="GO:0005886">
    <property type="term" value="C:plasma membrane"/>
    <property type="evidence" value="ECO:0007669"/>
    <property type="project" value="UniProtKB-SubCell"/>
</dbReference>
<dbReference type="GO" id="GO:0015123">
    <property type="term" value="F:acetate transmembrane transporter activity"/>
    <property type="evidence" value="ECO:0007669"/>
    <property type="project" value="UniProtKB-UniRule"/>
</dbReference>
<dbReference type="GO" id="GO:0043879">
    <property type="term" value="F:glycolate transmembrane transporter activity"/>
    <property type="evidence" value="ECO:0007669"/>
    <property type="project" value="InterPro"/>
</dbReference>
<dbReference type="GO" id="GO:0015293">
    <property type="term" value="F:symporter activity"/>
    <property type="evidence" value="ECO:0007669"/>
    <property type="project" value="UniProtKB-KW"/>
</dbReference>
<dbReference type="GO" id="GO:0006847">
    <property type="term" value="P:plasma membrane acetate transport"/>
    <property type="evidence" value="ECO:0007669"/>
    <property type="project" value="TreeGrafter"/>
</dbReference>
<dbReference type="GO" id="GO:0006814">
    <property type="term" value="P:sodium ion transport"/>
    <property type="evidence" value="ECO:0007669"/>
    <property type="project" value="UniProtKB-KW"/>
</dbReference>
<dbReference type="CDD" id="cd11480">
    <property type="entry name" value="SLC5sbd_u4"/>
    <property type="match status" value="1"/>
</dbReference>
<dbReference type="FunFam" id="1.20.1730.10:FF:000001">
    <property type="entry name" value="Cation/acetate symporter ActP"/>
    <property type="match status" value="1"/>
</dbReference>
<dbReference type="Gene3D" id="1.20.1730.10">
    <property type="entry name" value="Sodium/glucose cotransporter"/>
    <property type="match status" value="1"/>
</dbReference>
<dbReference type="HAMAP" id="MF_01426">
    <property type="entry name" value="Acet_symport_ActP"/>
    <property type="match status" value="1"/>
</dbReference>
<dbReference type="InterPro" id="IPR014083">
    <property type="entry name" value="Cation/Ac_symporter_ActP"/>
</dbReference>
<dbReference type="InterPro" id="IPR038377">
    <property type="entry name" value="Na/Glc_symporter_sf"/>
</dbReference>
<dbReference type="InterPro" id="IPR001734">
    <property type="entry name" value="Na/solute_symporter"/>
</dbReference>
<dbReference type="InterPro" id="IPR018212">
    <property type="entry name" value="Na/solute_symporter_CS"/>
</dbReference>
<dbReference type="InterPro" id="IPR050277">
    <property type="entry name" value="Sodium:Solute_Symporter"/>
</dbReference>
<dbReference type="NCBIfam" id="NF006903">
    <property type="entry name" value="PRK09395.1"/>
    <property type="match status" value="1"/>
</dbReference>
<dbReference type="NCBIfam" id="NF009135">
    <property type="entry name" value="PRK12488.1"/>
    <property type="match status" value="1"/>
</dbReference>
<dbReference type="NCBIfam" id="TIGR00813">
    <property type="entry name" value="sss"/>
    <property type="match status" value="1"/>
</dbReference>
<dbReference type="NCBIfam" id="TIGR02711">
    <property type="entry name" value="symport_actP"/>
    <property type="match status" value="1"/>
</dbReference>
<dbReference type="PANTHER" id="PTHR48086:SF6">
    <property type="entry name" value="CATION_ACETATE SYMPORTER ACTP"/>
    <property type="match status" value="1"/>
</dbReference>
<dbReference type="PANTHER" id="PTHR48086">
    <property type="entry name" value="SODIUM/PROLINE SYMPORTER-RELATED"/>
    <property type="match status" value="1"/>
</dbReference>
<dbReference type="Pfam" id="PF00474">
    <property type="entry name" value="SSF"/>
    <property type="match status" value="1"/>
</dbReference>
<dbReference type="PROSITE" id="PS00456">
    <property type="entry name" value="NA_SOLUT_SYMP_1"/>
    <property type="match status" value="1"/>
</dbReference>
<dbReference type="PROSITE" id="PS00457">
    <property type="entry name" value="NA_SOLUT_SYMP_2"/>
    <property type="match status" value="1"/>
</dbReference>
<dbReference type="PROSITE" id="PS50283">
    <property type="entry name" value="NA_SOLUT_SYMP_3"/>
    <property type="match status" value="1"/>
</dbReference>
<evidence type="ECO:0000255" key="1">
    <source>
        <dbReference type="HAMAP-Rule" id="MF_01426"/>
    </source>
</evidence>
<feature type="chain" id="PRO_1000068516" description="Cation/acetate symporter ActP">
    <location>
        <begin position="1"/>
        <end position="549"/>
    </location>
</feature>
<feature type="transmembrane region" description="Helical" evidence="1">
    <location>
        <begin position="33"/>
        <end position="53"/>
    </location>
</feature>
<feature type="transmembrane region" description="Helical" evidence="1">
    <location>
        <begin position="76"/>
        <end position="96"/>
    </location>
</feature>
<feature type="transmembrane region" description="Helical" evidence="1">
    <location>
        <begin position="103"/>
        <end position="123"/>
    </location>
</feature>
<feature type="transmembrane region" description="Helical" evidence="1">
    <location>
        <begin position="149"/>
        <end position="169"/>
    </location>
</feature>
<feature type="transmembrane region" description="Helical" evidence="1">
    <location>
        <begin position="183"/>
        <end position="203"/>
    </location>
</feature>
<feature type="transmembrane region" description="Helical" evidence="1">
    <location>
        <begin position="206"/>
        <end position="226"/>
    </location>
</feature>
<feature type="transmembrane region" description="Helical" evidence="1">
    <location>
        <begin position="262"/>
        <end position="282"/>
    </location>
</feature>
<feature type="transmembrane region" description="Helical" evidence="1">
    <location>
        <begin position="303"/>
        <end position="323"/>
    </location>
</feature>
<feature type="transmembrane region" description="Helical" evidence="1">
    <location>
        <begin position="355"/>
        <end position="375"/>
    </location>
</feature>
<feature type="transmembrane region" description="Helical" evidence="1">
    <location>
        <begin position="404"/>
        <end position="424"/>
    </location>
</feature>
<feature type="transmembrane region" description="Helical" evidence="1">
    <location>
        <begin position="428"/>
        <end position="448"/>
    </location>
</feature>
<feature type="transmembrane region" description="Helical" evidence="1">
    <location>
        <begin position="463"/>
        <end position="483"/>
    </location>
</feature>
<feature type="transmembrane region" description="Helical" evidence="1">
    <location>
        <begin position="493"/>
        <end position="513"/>
    </location>
</feature>
<reference key="1">
    <citation type="journal article" date="2010" name="PLoS Genet.">
        <title>Genome sequence of the plant growth promoting endophytic bacterium Enterobacter sp. 638.</title>
        <authorList>
            <person name="Taghavi S."/>
            <person name="van der Lelie D."/>
            <person name="Hoffman A."/>
            <person name="Zhang Y.B."/>
            <person name="Walla M.D."/>
            <person name="Vangronsveld J."/>
            <person name="Newman L."/>
            <person name="Monchy S."/>
        </authorList>
    </citation>
    <scope>NUCLEOTIDE SEQUENCE [LARGE SCALE GENOMIC DNA]</scope>
    <source>
        <strain>638</strain>
    </source>
</reference>
<name>ACTP_ENT38</name>
<proteinExistence type="inferred from homology"/>
<comment type="function">
    <text evidence="1">Transports acetate.</text>
</comment>
<comment type="subcellular location">
    <subcellularLocation>
        <location evidence="1">Cell inner membrane</location>
        <topology evidence="1">Multi-pass membrane protein</topology>
    </subcellularLocation>
</comment>
<comment type="similarity">
    <text evidence="1">Belongs to the sodium:solute symporter (SSF) (TC 2.A.21) family.</text>
</comment>
<protein>
    <recommendedName>
        <fullName evidence="1">Cation/acetate symporter ActP</fullName>
    </recommendedName>
    <alternativeName>
        <fullName evidence="1">Acetate permease</fullName>
    </alternativeName>
    <alternativeName>
        <fullName evidence="1">Acetate transporter ActP</fullName>
    </alternativeName>
</protein>
<accession>A4W5I3</accession>
<keyword id="KW-0997">Cell inner membrane</keyword>
<keyword id="KW-1003">Cell membrane</keyword>
<keyword id="KW-0406">Ion transport</keyword>
<keyword id="KW-0472">Membrane</keyword>
<keyword id="KW-0915">Sodium</keyword>
<keyword id="KW-0739">Sodium transport</keyword>
<keyword id="KW-0769">Symport</keyword>
<keyword id="KW-0812">Transmembrane</keyword>
<keyword id="KW-1133">Transmembrane helix</keyword>
<keyword id="KW-0813">Transport</keyword>
<organism>
    <name type="scientific">Enterobacter sp. (strain 638)</name>
    <dbReference type="NCBI Taxonomy" id="399742"/>
    <lineage>
        <taxon>Bacteria</taxon>
        <taxon>Pseudomonadati</taxon>
        <taxon>Pseudomonadota</taxon>
        <taxon>Gammaproteobacteria</taxon>
        <taxon>Enterobacterales</taxon>
        <taxon>Enterobacteriaceae</taxon>
        <taxon>Enterobacter</taxon>
    </lineage>
</organism>
<sequence length="549" mass="59129">MKRVLTALAATLPFAANAADALTGAVERQPTNWQAIIMFLIFVLLTLYITYWASKRVRSRNDYYTAGGNITGFQNGLAIAGDFMSAASFLGISALVYTSGYDGLIYSLGFLVGWPIILFLIAERLRNLGRYTFADVASYRLKQGPIRTLSACGSLVVVALYLIAQMVGAGKLIQLLFGLNYHIAVVLVGVLMVMYVLFGGMLATTWVQIIKAVLLLFGASFMAFMVMKHVGFSFNNLFTQAMAVHPKGEAIMSPGGLVKDPISALSLGLGLMFGTAGLPHILMRFFTVSDAREARKSVFYATGFMGYFYILTFIIGFGAIMLVGANPAFKDAAGTLIGGNNMAAVHLADAVGGNLFLGFISAVAFATILAVVAGLTLAGASAVSHDLYANVWRKGATERQELKVSKITVLILGVVAILLGILFENQNIAFMVGLAFSIAASCNFPIILLSMYWSKLTTRGAMIGGWLGLLTAVILMVLGPTIWVQILGHEKAIFPYEYPALFSIAVAFIGIWFFSATDNSAEGKLEREKFRAQFIRSQTGLGIDQGRAH</sequence>
<gene>
    <name evidence="1" type="primary">actP</name>
    <name type="ordered locus">Ent638_0274</name>
</gene>